<organism>
    <name type="scientific">Staphylococcus aureus (strain USA300)</name>
    <dbReference type="NCBI Taxonomy" id="367830"/>
    <lineage>
        <taxon>Bacteria</taxon>
        <taxon>Bacillati</taxon>
        <taxon>Bacillota</taxon>
        <taxon>Bacilli</taxon>
        <taxon>Bacillales</taxon>
        <taxon>Staphylococcaceae</taxon>
        <taxon>Staphylococcus</taxon>
    </lineage>
</organism>
<protein>
    <recommendedName>
        <fullName evidence="1">Tagatose 1,6-diphosphate aldolase</fullName>
        <ecNumber evidence="1">4.1.2.40</ecNumber>
    </recommendedName>
    <alternativeName>
        <fullName evidence="1">D-tagatose-1,6-bisphosphate aldolase</fullName>
    </alternativeName>
    <alternativeName>
        <fullName evidence="1">Tagatose-bisphosphate aldolase</fullName>
    </alternativeName>
</protein>
<feature type="chain" id="PRO_1000045977" description="Tagatose 1,6-diphosphate aldolase">
    <location>
        <begin position="1"/>
        <end position="326"/>
    </location>
</feature>
<dbReference type="EC" id="4.1.2.40" evidence="1"/>
<dbReference type="EMBL" id="CP000255">
    <property type="protein sequence ID" value="ABD20452.1"/>
    <property type="molecule type" value="Genomic_DNA"/>
</dbReference>
<dbReference type="RefSeq" id="WP_000047009.1">
    <property type="nucleotide sequence ID" value="NZ_CP027476.1"/>
</dbReference>
<dbReference type="SMR" id="Q2FEU0"/>
<dbReference type="KEGG" id="saa:SAUSA300_2152"/>
<dbReference type="HOGENOM" id="CLU_058971_0_1_9"/>
<dbReference type="OMA" id="CIKILLY"/>
<dbReference type="UniPathway" id="UPA00704">
    <property type="reaction ID" value="UER00716"/>
</dbReference>
<dbReference type="Proteomes" id="UP000001939">
    <property type="component" value="Chromosome"/>
</dbReference>
<dbReference type="GO" id="GO:0061595">
    <property type="term" value="F:6-deoxy-6-sulfofructose-1-phosphate aldolase activity"/>
    <property type="evidence" value="ECO:0007669"/>
    <property type="project" value="TreeGrafter"/>
</dbReference>
<dbReference type="GO" id="GO:0009024">
    <property type="term" value="F:tagatose-6-phosphate kinase activity"/>
    <property type="evidence" value="ECO:0007669"/>
    <property type="project" value="InterPro"/>
</dbReference>
<dbReference type="GO" id="GO:0009025">
    <property type="term" value="F:tagatose-bisphosphate aldolase activity"/>
    <property type="evidence" value="ECO:0007669"/>
    <property type="project" value="UniProtKB-UniRule"/>
</dbReference>
<dbReference type="GO" id="GO:1902777">
    <property type="term" value="P:6-sulfoquinovose(1-) catabolic process"/>
    <property type="evidence" value="ECO:0007669"/>
    <property type="project" value="TreeGrafter"/>
</dbReference>
<dbReference type="GO" id="GO:2001059">
    <property type="term" value="P:D-tagatose 6-phosphate catabolic process"/>
    <property type="evidence" value="ECO:0007669"/>
    <property type="project" value="UniProtKB-UniRule"/>
</dbReference>
<dbReference type="GO" id="GO:0019512">
    <property type="term" value="P:lactose catabolic process via tagatose-6-phosphate"/>
    <property type="evidence" value="ECO:0007669"/>
    <property type="project" value="InterPro"/>
</dbReference>
<dbReference type="FunFam" id="3.20.20.70:FF:000137">
    <property type="entry name" value="Tagatose 1,6-diphosphate aldolase 2"/>
    <property type="match status" value="1"/>
</dbReference>
<dbReference type="Gene3D" id="3.20.20.70">
    <property type="entry name" value="Aldolase class I"/>
    <property type="match status" value="1"/>
</dbReference>
<dbReference type="HAMAP" id="MF_00734">
    <property type="entry name" value="LacD"/>
    <property type="match status" value="1"/>
</dbReference>
<dbReference type="InterPro" id="IPR013785">
    <property type="entry name" value="Aldolase_TIM"/>
</dbReference>
<dbReference type="InterPro" id="IPR002915">
    <property type="entry name" value="DeoC/FbaB/LacD_aldolase"/>
</dbReference>
<dbReference type="InterPro" id="IPR050552">
    <property type="entry name" value="LacD_aldolase"/>
</dbReference>
<dbReference type="InterPro" id="IPR005927">
    <property type="entry name" value="Tag_1.6-dipho_adolase"/>
</dbReference>
<dbReference type="NCBIfam" id="TIGR01232">
    <property type="entry name" value="lacD"/>
    <property type="match status" value="1"/>
</dbReference>
<dbReference type="NCBIfam" id="NF003180">
    <property type="entry name" value="PRK04161.1"/>
    <property type="match status" value="1"/>
</dbReference>
<dbReference type="NCBIfam" id="NF009065">
    <property type="entry name" value="PRK12399.1"/>
    <property type="match status" value="1"/>
</dbReference>
<dbReference type="NCBIfam" id="NF009498">
    <property type="entry name" value="PRK12858.1"/>
    <property type="match status" value="1"/>
</dbReference>
<dbReference type="PANTHER" id="PTHR39340">
    <property type="entry name" value="SULFOFRUCTOSEPHOSPHATE ALDOLASE"/>
    <property type="match status" value="1"/>
</dbReference>
<dbReference type="PANTHER" id="PTHR39340:SF1">
    <property type="entry name" value="SULFOFRUCTOSEPHOSPHATE ALDOLASE"/>
    <property type="match status" value="1"/>
</dbReference>
<dbReference type="Pfam" id="PF01791">
    <property type="entry name" value="DeoC"/>
    <property type="match status" value="1"/>
</dbReference>
<dbReference type="SMART" id="SM01133">
    <property type="entry name" value="DeoC"/>
    <property type="match status" value="1"/>
</dbReference>
<dbReference type="SUPFAM" id="SSF51569">
    <property type="entry name" value="Aldolase"/>
    <property type="match status" value="1"/>
</dbReference>
<gene>
    <name evidence="1" type="primary">lacD</name>
    <name type="ordered locus">SAUSA300_2152</name>
</gene>
<reference key="1">
    <citation type="journal article" date="2006" name="Lancet">
        <title>Complete genome sequence of USA300, an epidemic clone of community-acquired meticillin-resistant Staphylococcus aureus.</title>
        <authorList>
            <person name="Diep B.A."/>
            <person name="Gill S.R."/>
            <person name="Chang R.F."/>
            <person name="Phan T.H."/>
            <person name="Chen J.H."/>
            <person name="Davidson M.G."/>
            <person name="Lin F."/>
            <person name="Lin J."/>
            <person name="Carleton H.A."/>
            <person name="Mongodin E.F."/>
            <person name="Sensabaugh G.F."/>
            <person name="Perdreau-Remington F."/>
        </authorList>
    </citation>
    <scope>NUCLEOTIDE SEQUENCE [LARGE SCALE GENOMIC DNA]</scope>
    <source>
        <strain>USA300</strain>
    </source>
</reference>
<evidence type="ECO:0000255" key="1">
    <source>
        <dbReference type="HAMAP-Rule" id="MF_00734"/>
    </source>
</evidence>
<accession>Q2FEU0</accession>
<sequence>MSKSNQKIASIEQLSNNEGIISALAFDQRGALKRMMAKHQTEEPTVAQIEQLKVLVAEELTQYASSILLDPEYGLPASDARNKDCGLLLAYEKTGYDVNAKGRLPDCLVEWSAKRLKEQGANAVKFLLYYDVDDAEEINIQKKAYIERIGSECVAEDIPFFLEVLTYDDNIPDNGSVEFAKVKPRKVNEAMKLFSEPRFNVDVLKVEVPVNMKYVEGFAEGEVVYTKEEAAQHFKDQDAATHLPYIYLSAGVSAELFQETLKFAHEAGAKFNGVLCGRATWSGAVQVYIEQGEDAAREWLRTTGFKNIDDLNKVLKDTATSWKQRK</sequence>
<keyword id="KW-0423">Lactose metabolism</keyword>
<keyword id="KW-0456">Lyase</keyword>
<comment type="catalytic activity">
    <reaction evidence="1">
        <text>D-tagatofuranose 1,6-bisphosphate = D-glyceraldehyde 3-phosphate + dihydroxyacetone phosphate</text>
        <dbReference type="Rhea" id="RHEA:22948"/>
        <dbReference type="ChEBI" id="CHEBI:57642"/>
        <dbReference type="ChEBI" id="CHEBI:58694"/>
        <dbReference type="ChEBI" id="CHEBI:59776"/>
        <dbReference type="EC" id="4.1.2.40"/>
    </reaction>
</comment>
<comment type="pathway">
    <text evidence="1">Carbohydrate metabolism; D-tagatose 6-phosphate degradation; D-glyceraldehyde 3-phosphate and glycerone phosphate from D-tagatose 6-phosphate: step 2/2.</text>
</comment>
<comment type="similarity">
    <text evidence="1">Belongs to the aldolase LacD family.</text>
</comment>
<name>LACD_STAA3</name>
<proteinExistence type="inferred from homology"/>